<evidence type="ECO:0000250" key="1">
    <source>
        <dbReference type="UniProtKB" id="O75503"/>
    </source>
</evidence>
<evidence type="ECO:0000250" key="2">
    <source>
        <dbReference type="UniProtKB" id="Q3UMW8"/>
    </source>
</evidence>
<evidence type="ECO:0000255" key="3"/>
<evidence type="ECO:0000256" key="4">
    <source>
        <dbReference type="SAM" id="MobiDB-lite"/>
    </source>
</evidence>
<evidence type="ECO:0000305" key="5"/>
<name>CLN5_BOVIN</name>
<accession>Q1ZYR0</accession>
<reference key="1">
    <citation type="journal article" date="2006" name="Biochim. Biophys. Acta">
        <title>Neuronal ceroid lipofuscinosis in Devon cattle is caused by a single base duplication (c.662dupG) in the bovine CLN5 gene.</title>
        <authorList>
            <person name="Houweling P.J."/>
            <person name="Cavanagh J.A.L."/>
            <person name="Palmer D.N."/>
            <person name="Frugier T."/>
            <person name="Mitchell N.L."/>
            <person name="Windsor P.A."/>
            <person name="Raadsma H.W."/>
            <person name="Tammen I."/>
        </authorList>
    </citation>
    <scope>NUCLEOTIDE SEQUENCE [MRNA]</scope>
    <scope>INVOLVEMENT IN NCL</scope>
</reference>
<keyword id="KW-1015">Disulfide bond</keyword>
<keyword id="KW-0325">Glycoprotein</keyword>
<keyword id="KW-0378">Hydrolase</keyword>
<keyword id="KW-0458">Lysosome</keyword>
<keyword id="KW-0472">Membrane</keyword>
<keyword id="KW-0523">Neurodegeneration</keyword>
<keyword id="KW-0525">Neuronal ceroid lipofuscinosis</keyword>
<keyword id="KW-1185">Reference proteome</keyword>
<keyword id="KW-0735">Signal-anchor</keyword>
<keyword id="KW-0808">Transferase</keyword>
<keyword id="KW-0812">Transmembrane</keyword>
<keyword id="KW-1133">Transmembrane helix</keyword>
<organism>
    <name type="scientific">Bos taurus</name>
    <name type="common">Bovine</name>
    <dbReference type="NCBI Taxonomy" id="9913"/>
    <lineage>
        <taxon>Eukaryota</taxon>
        <taxon>Metazoa</taxon>
        <taxon>Chordata</taxon>
        <taxon>Craniata</taxon>
        <taxon>Vertebrata</taxon>
        <taxon>Euteleostomi</taxon>
        <taxon>Mammalia</taxon>
        <taxon>Eutheria</taxon>
        <taxon>Laurasiatheria</taxon>
        <taxon>Artiodactyla</taxon>
        <taxon>Ruminantia</taxon>
        <taxon>Pecora</taxon>
        <taxon>Bovidae</taxon>
        <taxon>Bovinae</taxon>
        <taxon>Bos</taxon>
    </lineage>
</organism>
<protein>
    <recommendedName>
        <fullName evidence="1">Bis(monoacylglycero)phosphate synthase CLN5</fullName>
        <shortName>BMP synthase CLN5</shortName>
        <ecNumber evidence="1">2.3.1.-</ecNumber>
    </recommendedName>
    <alternativeName>
        <fullName>Ceroid-lipofuscinosis neuronal protein 5</fullName>
        <shortName>Protein CLN5</shortName>
    </alternativeName>
    <alternativeName>
        <fullName>Palmitoyl protein thioesterase CLN5</fullName>
        <ecNumber evidence="1">3.1.2.22</ecNumber>
    </alternativeName>
    <alternativeName>
        <fullName>S-depalmitoylase CLN5</fullName>
    </alternativeName>
    <component>
        <recommendedName>
            <fullName>Bis(monoacylglycero)phosphate synthase CLN5, secreted form</fullName>
        </recommendedName>
    </component>
</protein>
<gene>
    <name type="primary">CLN5</name>
    <name evidence="1" type="synonym">BMPS</name>
</gene>
<dbReference type="EC" id="2.3.1.-" evidence="1"/>
<dbReference type="EC" id="3.1.2.22" evidence="1"/>
<dbReference type="EMBL" id="DQ421787">
    <property type="protein sequence ID" value="ABD83352.1"/>
    <property type="molecule type" value="mRNA"/>
</dbReference>
<dbReference type="RefSeq" id="NP_001039764.1">
    <property type="nucleotide sequence ID" value="NM_001046299.1"/>
</dbReference>
<dbReference type="SMR" id="Q1ZYR0"/>
<dbReference type="FunCoup" id="Q1ZYR0">
    <property type="interactions" value="1625"/>
</dbReference>
<dbReference type="STRING" id="9913.ENSBTAP00000025093"/>
<dbReference type="GlyCosmos" id="Q1ZYR0">
    <property type="glycosylation" value="8 sites, No reported glycans"/>
</dbReference>
<dbReference type="GlyGen" id="Q1ZYR0">
    <property type="glycosylation" value="8 sites"/>
</dbReference>
<dbReference type="PaxDb" id="9913-ENSBTAP00000025093"/>
<dbReference type="Ensembl" id="ENSBTAT00000025093.7">
    <property type="protein sequence ID" value="ENSBTAP00000025093.5"/>
    <property type="gene ID" value="ENSBTAG00000018846.7"/>
</dbReference>
<dbReference type="GeneID" id="529186"/>
<dbReference type="KEGG" id="bta:529186"/>
<dbReference type="CTD" id="1203"/>
<dbReference type="VEuPathDB" id="HostDB:ENSBTAG00000018846"/>
<dbReference type="VGNC" id="VGNC:107252">
    <property type="gene designation" value="CLN5"/>
</dbReference>
<dbReference type="eggNOG" id="ENOG502QPQ5">
    <property type="taxonomic scope" value="Eukaryota"/>
</dbReference>
<dbReference type="GeneTree" id="ENSGT00390000010065"/>
<dbReference type="HOGENOM" id="CLU_050387_0_0_1"/>
<dbReference type="InParanoid" id="Q1ZYR0"/>
<dbReference type="OMA" id="FRPHQSF"/>
<dbReference type="OrthoDB" id="10005881at2759"/>
<dbReference type="TreeFam" id="TF330864"/>
<dbReference type="Proteomes" id="UP000009136">
    <property type="component" value="Chromosome 12"/>
</dbReference>
<dbReference type="Bgee" id="ENSBTAG00000018846">
    <property type="expression patterns" value="Expressed in liver and 107 other cell types or tissues"/>
</dbReference>
<dbReference type="GO" id="GO:0005829">
    <property type="term" value="C:cytosol"/>
    <property type="evidence" value="ECO:0007669"/>
    <property type="project" value="GOC"/>
</dbReference>
<dbReference type="GO" id="GO:0005783">
    <property type="term" value="C:endoplasmic reticulum"/>
    <property type="evidence" value="ECO:0000250"/>
    <property type="project" value="UniProtKB"/>
</dbReference>
<dbReference type="GO" id="GO:0005794">
    <property type="term" value="C:Golgi apparatus"/>
    <property type="evidence" value="ECO:0000250"/>
    <property type="project" value="UniProtKB"/>
</dbReference>
<dbReference type="GO" id="GO:0005765">
    <property type="term" value="C:lysosomal membrane"/>
    <property type="evidence" value="ECO:0000250"/>
    <property type="project" value="UniProtKB"/>
</dbReference>
<dbReference type="GO" id="GO:0005764">
    <property type="term" value="C:lysosome"/>
    <property type="evidence" value="ECO:0000250"/>
    <property type="project" value="UniProtKB"/>
</dbReference>
<dbReference type="GO" id="GO:0016020">
    <property type="term" value="C:membrane"/>
    <property type="evidence" value="ECO:0000250"/>
    <property type="project" value="UniProtKB"/>
</dbReference>
<dbReference type="GO" id="GO:0048471">
    <property type="term" value="C:perinuclear region of cytoplasm"/>
    <property type="evidence" value="ECO:0000250"/>
    <property type="project" value="UniProtKB"/>
</dbReference>
<dbReference type="GO" id="GO:0005775">
    <property type="term" value="C:vacuolar lumen"/>
    <property type="evidence" value="ECO:0007669"/>
    <property type="project" value="Ensembl"/>
</dbReference>
<dbReference type="GO" id="GO:0160121">
    <property type="term" value="F:bis(monoacylglycero)phosphate synthase activity"/>
    <property type="evidence" value="ECO:0000250"/>
    <property type="project" value="UniProtKB"/>
</dbReference>
<dbReference type="GO" id="GO:0005537">
    <property type="term" value="F:D-mannose binding"/>
    <property type="evidence" value="ECO:0000250"/>
    <property type="project" value="UniProtKB"/>
</dbReference>
<dbReference type="GO" id="GO:0016798">
    <property type="term" value="F:hydrolase activity, acting on glycosyl bonds"/>
    <property type="evidence" value="ECO:0000318"/>
    <property type="project" value="GO_Central"/>
</dbReference>
<dbReference type="GO" id="GO:0052816">
    <property type="term" value="F:long-chain fatty acyl-CoA hydrolase activity"/>
    <property type="evidence" value="ECO:0000250"/>
    <property type="project" value="UniProtKB"/>
</dbReference>
<dbReference type="GO" id="GO:0007420">
    <property type="term" value="P:brain development"/>
    <property type="evidence" value="ECO:0000250"/>
    <property type="project" value="UniProtKB"/>
</dbReference>
<dbReference type="GO" id="GO:0070085">
    <property type="term" value="P:glycosylation"/>
    <property type="evidence" value="ECO:0000250"/>
    <property type="project" value="UniProtKB"/>
</dbReference>
<dbReference type="GO" id="GO:0007042">
    <property type="term" value="P:lysosomal lumen acidification"/>
    <property type="evidence" value="ECO:0000250"/>
    <property type="project" value="UniProtKB"/>
</dbReference>
<dbReference type="GO" id="GO:0007040">
    <property type="term" value="P:lysosome organization"/>
    <property type="evidence" value="ECO:0000318"/>
    <property type="project" value="GO_Central"/>
</dbReference>
<dbReference type="GO" id="GO:0022008">
    <property type="term" value="P:neurogenesis"/>
    <property type="evidence" value="ECO:0000250"/>
    <property type="project" value="UniProtKB"/>
</dbReference>
<dbReference type="GO" id="GO:1904426">
    <property type="term" value="P:positive regulation of GTP binding"/>
    <property type="evidence" value="ECO:0000250"/>
    <property type="project" value="UniProtKB"/>
</dbReference>
<dbReference type="GO" id="GO:0042147">
    <property type="term" value="P:retrograde transport, endosome to Golgi"/>
    <property type="evidence" value="ECO:0000250"/>
    <property type="project" value="UniProtKB"/>
</dbReference>
<dbReference type="GO" id="GO:0006465">
    <property type="term" value="P:signal peptide processing"/>
    <property type="evidence" value="ECO:0000250"/>
    <property type="project" value="UniProtKB"/>
</dbReference>
<dbReference type="GO" id="GO:0007601">
    <property type="term" value="P:visual perception"/>
    <property type="evidence" value="ECO:0007669"/>
    <property type="project" value="Ensembl"/>
</dbReference>
<dbReference type="InterPro" id="IPR026138">
    <property type="entry name" value="CLN5"/>
</dbReference>
<dbReference type="PANTHER" id="PTHR15380:SF2">
    <property type="entry name" value="CEROID-LIPOFUSCINOSIS NEURONAL PROTEIN 5"/>
    <property type="match status" value="1"/>
</dbReference>
<dbReference type="PANTHER" id="PTHR15380">
    <property type="entry name" value="CEROID-LIPOFUSCINOSIS, NEURONAL 5"/>
    <property type="match status" value="1"/>
</dbReference>
<dbReference type="Pfam" id="PF15014">
    <property type="entry name" value="CLN5"/>
    <property type="match status" value="1"/>
</dbReference>
<sequence>MAQVGSAGPGACGRRGAGAGAGPERTTWRWAPALLWLATAAAVAGDPSRRQWPVPYKRFSFRPEPDPYCQAKYTFCPTGSPIPVMKDDDVIEVFRLQAPVWEFKYGDLLGHLKIMHDAIGFRSTLTEKNYTMEWYELFQLGNCTFPHLRPEMNAPFWCNQGAACFFEGIDDSHWKENGTLVLVATISGGMFNRMAKWVKQDNETGIYYETWTVQASPERGAERWFESYDCSKFVLRTYEKLAELGADFKKIETNYTRIFLYSGEPTYLGNETSVFGPTGNKTLALAIKKFYYPFKPHLSTKEFLLSLLQIFDAVVIHREFYLFYNFEYWFLPMKYPFIKITYEEIPLPNRKNRTLSGL</sequence>
<proteinExistence type="evidence at transcript level"/>
<feature type="chain" id="PRO_0000330469" description="Bis(monoacylglycero)phosphate synthase CLN5">
    <location>
        <begin position="1"/>
        <end position="358"/>
    </location>
</feature>
<feature type="chain" id="PRO_0000438007" description="Bis(monoacylglycero)phosphate synthase CLN5, secreted form">
    <location>
        <begin position="43"/>
        <end position="358"/>
    </location>
</feature>
<feature type="topological domain" description="Cytoplasmic" evidence="1">
    <location>
        <begin position="1"/>
        <end position="29"/>
    </location>
</feature>
<feature type="transmembrane region" description="Helical; Signal-anchor for type II membrane protein" evidence="3">
    <location>
        <begin position="30"/>
        <end position="46"/>
    </location>
</feature>
<feature type="topological domain" description="Lumenal" evidence="1">
    <location>
        <begin position="47"/>
        <end position="358"/>
    </location>
</feature>
<feature type="region of interest" description="Disordered" evidence="4">
    <location>
        <begin position="1"/>
        <end position="23"/>
    </location>
</feature>
<feature type="region of interest" description="Membrane-anchoring" evidence="1">
    <location>
        <begin position="303"/>
        <end position="342"/>
    </location>
</feature>
<feature type="compositionally biased region" description="Gly residues" evidence="4">
    <location>
        <begin position="7"/>
        <end position="21"/>
    </location>
</feature>
<feature type="active site" description="Proton acceptor" evidence="1">
    <location>
        <position position="116"/>
    </location>
</feature>
<feature type="active site" description="Nucleophile; Acyl-thioester intermediate" evidence="1">
    <location>
        <position position="230"/>
    </location>
</feature>
<feature type="site" description="Cleavage; by SPPL3" evidence="1">
    <location>
        <begin position="42"/>
        <end position="43"/>
    </location>
</feature>
<feature type="glycosylation site" description="N-linked (GlcNAc...) asparagine" evidence="3">
    <location>
        <position position="129"/>
    </location>
</feature>
<feature type="glycosylation site" description="N-linked (GlcNAc...) asparagine" evidence="3">
    <location>
        <position position="142"/>
    </location>
</feature>
<feature type="glycosylation site" description="N-linked (GlcNAc...) asparagine" evidence="3">
    <location>
        <position position="177"/>
    </location>
</feature>
<feature type="glycosylation site" description="N-linked (GlcNAc...) asparagine" evidence="3">
    <location>
        <position position="202"/>
    </location>
</feature>
<feature type="glycosylation site" description="N-linked (GlcNAc...) asparagine" evidence="3">
    <location>
        <position position="254"/>
    </location>
</feature>
<feature type="glycosylation site" description="N-linked (GlcNAc...) asparagine" evidence="3">
    <location>
        <position position="270"/>
    </location>
</feature>
<feature type="glycosylation site" description="N-linked (GlcNAc...) asparagine" evidence="3">
    <location>
        <position position="280"/>
    </location>
</feature>
<feature type="glycosylation site" description="N-linked (GlcNAc...) asparagine" evidence="3">
    <location>
        <position position="352"/>
    </location>
</feature>
<feature type="disulfide bond" evidence="1">
    <location>
        <begin position="69"/>
        <end position="158"/>
    </location>
</feature>
<feature type="disulfide bond" evidence="1">
    <location>
        <begin position="76"/>
        <end position="164"/>
    </location>
</feature>
<comment type="function">
    <molecule>Bis(monoacylglycero)phosphate synthase CLN5, secreted form</molecule>
    <text evidence="1">Catalyzes the synthesis of bis(monoacylglycero)phosphate (BMP) via transacylation of 2 molecules of lysophosphatidylglycerol (LPG). BMP also known as lysobisphosphatidic acid plays a key role in the formation of intraluminal vesicles and in maintaining intracellular cholesterol homeostasis. Can use only LPG as the exclusive lysophospholipid acyl donor for base exchange and displays BMP synthase activity towards various LPGs (LPG 14:0, LPG 16:0, LPG 18:0, LPG 18:1) with a higher preference for longer chain lengths. Plays a role in influencing the retrograde trafficking of lysosomal sorting receptors SORT1 and IGF2R from the endosomes to the trans-Golgi network by controlling the recruitment of retromer complex to the endosomal membrane. Regulates the localization and activation of RAB7A which is required to recruit the retromer complex to the endosomal membrane.</text>
</comment>
<comment type="function">
    <text evidence="1">Exhibits palmitoyl protein thioesterase (S-depalmitoylation) activity in vitro and most likely plays a role in protein S-depalmitoylation.</text>
</comment>
<comment type="catalytic activity">
    <reaction evidence="1">
        <text>S-hexadecanoyl-L-cysteinyl-[protein] + H2O = L-cysteinyl-[protein] + hexadecanoate + H(+)</text>
        <dbReference type="Rhea" id="RHEA:19233"/>
        <dbReference type="Rhea" id="RHEA-COMP:10131"/>
        <dbReference type="Rhea" id="RHEA-COMP:11032"/>
        <dbReference type="ChEBI" id="CHEBI:7896"/>
        <dbReference type="ChEBI" id="CHEBI:15377"/>
        <dbReference type="ChEBI" id="CHEBI:15378"/>
        <dbReference type="ChEBI" id="CHEBI:29950"/>
        <dbReference type="ChEBI" id="CHEBI:74151"/>
        <dbReference type="EC" id="3.1.2.22"/>
    </reaction>
    <physiologicalReaction direction="left-to-right" evidence="1">
        <dbReference type="Rhea" id="RHEA:19234"/>
    </physiologicalReaction>
</comment>
<comment type="catalytic activity">
    <molecule>Bis(monoacylglycero)phosphate synthase CLN5, secreted form</molecule>
    <reaction evidence="1">
        <text>2 1-acyl-sn-glycero-3-phospho-(1'-sn-glycerol) = 1-acyl-sn-glycero-3-phospho-(3'-acyl-sn-1'-glycerol) + sn-glycero-3-phospho-(1'-sn-glycerol)</text>
        <dbReference type="Rhea" id="RHEA:77619"/>
        <dbReference type="ChEBI" id="CHEBI:64717"/>
        <dbReference type="ChEBI" id="CHEBI:64840"/>
        <dbReference type="ChEBI" id="CHEBI:232628"/>
    </reaction>
    <physiologicalReaction direction="left-to-right" evidence="1">
        <dbReference type="Rhea" id="RHEA:77620"/>
    </physiologicalReaction>
</comment>
<comment type="catalytic activity">
    <molecule>Bis(monoacylglycero)phosphate synthase CLN5, secreted form</molecule>
    <reaction evidence="1">
        <text>2 1-(9Z-octadecenoyl)-sn-glycero-3-phospho-(1'-sn-glycerol) = 1-(9Z-octadecenoyl)-sn-glycero-3-phospho-(3'-(9Z-octadecenoyl)-1'-sn-glycerol) + sn-glycero-3-phospho-(1'-sn-glycerol)</text>
        <dbReference type="Rhea" id="RHEA:77599"/>
        <dbReference type="ChEBI" id="CHEBI:64717"/>
        <dbReference type="ChEBI" id="CHEBI:72828"/>
        <dbReference type="ChEBI" id="CHEBI:232637"/>
    </reaction>
    <physiologicalReaction direction="left-to-right" evidence="1">
        <dbReference type="Rhea" id="RHEA:77600"/>
    </physiologicalReaction>
</comment>
<comment type="catalytic activity">
    <molecule>Bis(monoacylglycero)phosphate synthase CLN5, secreted form</molecule>
    <reaction evidence="1">
        <text>2 1-octadecanoyl-sn-glycero-3-phospho-(1'-sn-glycerol) = 1-octadecanoyl-sn-glycero-3-phospho-(3'-octadecanoyl-1'-sn-glycerol) + sn-glycero-3-phospho-(1'-sn-glycerol)</text>
        <dbReference type="Rhea" id="RHEA:77603"/>
        <dbReference type="ChEBI" id="CHEBI:64717"/>
        <dbReference type="ChEBI" id="CHEBI:72827"/>
        <dbReference type="ChEBI" id="CHEBI:232638"/>
    </reaction>
    <physiologicalReaction direction="left-to-right" evidence="1">
        <dbReference type="Rhea" id="RHEA:77604"/>
    </physiologicalReaction>
</comment>
<comment type="catalytic activity">
    <molecule>Bis(monoacylglycero)phosphate synthase CLN5, secreted form</molecule>
    <reaction evidence="1">
        <text>2 1-hexadecanoyl-sn-glycero-3-phospho-(1'-sn-glycerol) = 1-hexadecanoyl-sn-glycero-3-phospho-(3'-hexadecanoyl-1'-sn-glycerol) + sn-glycero-3-phospho-(1'-sn-glycerol)</text>
        <dbReference type="Rhea" id="RHEA:77607"/>
        <dbReference type="ChEBI" id="CHEBI:64717"/>
        <dbReference type="ChEBI" id="CHEBI:75158"/>
        <dbReference type="ChEBI" id="CHEBI:232639"/>
    </reaction>
    <physiologicalReaction direction="left-to-right" evidence="1">
        <dbReference type="Rhea" id="RHEA:77608"/>
    </physiologicalReaction>
</comment>
<comment type="catalytic activity">
    <molecule>Bis(monoacylglycero)phosphate synthase CLN5, secreted form</molecule>
    <reaction evidence="1">
        <text>2 1-tetradecanoyl-sn-glycero-3-phospho-(1'-sn-glycerol) = 1-tetradecanoyl-sn-glycero-3-phospho-(3'-tetradecanoyl-1'-sn-glycerol) + sn-glycero-3-phospho-(1'-sn-glycerol)</text>
        <dbReference type="Rhea" id="RHEA:77611"/>
        <dbReference type="ChEBI" id="CHEBI:64717"/>
        <dbReference type="ChEBI" id="CHEBI:72826"/>
        <dbReference type="ChEBI" id="CHEBI:232640"/>
    </reaction>
    <physiologicalReaction direction="left-to-right" evidence="1">
        <dbReference type="Rhea" id="RHEA:77612"/>
    </physiologicalReaction>
</comment>
<comment type="subunit">
    <text evidence="1 2">Multimer. Interacts with SORT1, RAB5A and RAB7A. Interacts with PPT1, TPP1, CLN3, CLN6, CLN8, ATP5F1A and ATP5F1B.</text>
</comment>
<comment type="subcellular location">
    <molecule>Bis(monoacylglycero)phosphate synthase CLN5, secreted form</molecule>
    <subcellularLocation>
        <location evidence="1">Lysosome</location>
    </subcellularLocation>
</comment>
<comment type="subcellular location">
    <molecule>Bis(monoacylglycero)phosphate synthase CLN5</molecule>
    <subcellularLocation>
        <location evidence="1">Membrane</location>
        <topology evidence="1">Single-pass type II membrane protein</topology>
    </subcellularLocation>
    <text evidence="1">An amphipathic anchor region facilitates its association with the membrane.</text>
</comment>
<comment type="PTM">
    <text evidence="1">N-glycosylated with both high mannose and complex type sugars. Glycosylation is important for proper folding and trafficking to the lysosomes.</text>
</comment>
<comment type="PTM">
    <molecule>Bis(monoacylglycero)phosphate synthase CLN5</molecule>
    <text evidence="1">The type II membrane signal anchor is proteolytically cleaved to produce a mature form that is transported to the lysosomes (Bis(monoacylglycero)phosphate synthase CLN5, secreted form).</text>
</comment>
<comment type="PTM">
    <text evidence="1">Can undergo proteolytic cleavage at the C-terminus, probably by a cysteine protease and may involve the removal of approximately 10-15 residues from the C-terminal end.</text>
</comment>
<comment type="disease">
    <text>Defects in CLN5 are the cause of neuronal ceroid lipofuscinosis (NCL). NCL is characterized by brain atrophy and the accumulation of lysosome derived fluorescent storage bodies in neurons and most other cells. NCL is found in Australian Devon cattle.</text>
</comment>
<comment type="similarity">
    <text evidence="5">Belongs to the CLN5 family.</text>
</comment>